<keyword id="KW-0002">3D-structure</keyword>
<keyword id="KW-0997">Cell inner membrane</keyword>
<keyword id="KW-1003">Cell membrane</keyword>
<keyword id="KW-0201">Cytochrome c-type biogenesis</keyword>
<keyword id="KW-1015">Disulfide bond</keyword>
<keyword id="KW-0249">Electron transport</keyword>
<keyword id="KW-0472">Membrane</keyword>
<keyword id="KW-0520">NAD</keyword>
<keyword id="KW-0560">Oxidoreductase</keyword>
<keyword id="KW-0676">Redox-active center</keyword>
<keyword id="KW-1185">Reference proteome</keyword>
<keyword id="KW-0732">Signal</keyword>
<keyword id="KW-0812">Transmembrane</keyword>
<keyword id="KW-1133">Transmembrane helix</keyword>
<keyword id="KW-0813">Transport</keyword>
<sequence length="565" mass="61839">MAQRIFTLILLLCSTSVFAGLFDAPGRSQFVPVDQAFAFDFQQNQHDLNLTWQIKDGYYLYRKQIRITPEHAKIADVQLPQGVWHEDEFYGKSEIYRDRLTLPVTINQASAGATLTVTYQGCADAGFCYPPETKTVPLSEVVANNAASQPVSVPQQEQPTAQLPFSALWALLIGIGIAFTPCVLPMYPLISGIVLGGKQRLSTARALLLTFIYVQGMALTYTALGLVVAAAGLQFQAALQHPYVLIGLTIVFTLLAMSMFGLLTLQLPSSLQTRLTLMSNRQQGGSPGGVFIMGTIAGLICSPCTTAPLSAILLYIAQSGNMWLGGGTLYLYALGMGLPLMLITVFGNRLLPKSGPWMEQVKTAFGFVILALPVFLLERVIGDVWGLRLWSALGVAFFGWAFITSLQAKRGWMRVVQIILLAAALVSVRPLQDWAFGATHTAQTQTHLNFTQIKTVDELNQALVEAKGKPVMLDLYADWCVACKEFEKYTFSDPQVQKALADTVLLQANVTANDAQDVALLKHLNVLGLPTILFFDGQGQEHPQARVTGFMDAETFSAHLRDRQP</sequence>
<feature type="signal peptide" evidence="2">
    <location>
        <begin position="1"/>
        <end position="19"/>
    </location>
</feature>
<feature type="chain" id="PRO_0000007374" description="Thiol:disulfide interchange protein DsbD">
    <location>
        <begin position="20"/>
        <end position="565"/>
    </location>
</feature>
<feature type="topological domain" description="Periplasmic" evidence="1">
    <location>
        <begin position="20"/>
        <end position="162"/>
    </location>
</feature>
<feature type="transmembrane region" description="Helical" evidence="2">
    <location>
        <begin position="163"/>
        <end position="183"/>
    </location>
</feature>
<feature type="topological domain" description="Cytoplasmic" evidence="1">
    <location>
        <begin position="184"/>
        <end position="207"/>
    </location>
</feature>
<feature type="transmembrane region" description="Helical" evidence="2">
    <location>
        <begin position="208"/>
        <end position="228"/>
    </location>
</feature>
<feature type="topological domain" description="Periplasmic" evidence="1">
    <location>
        <begin position="229"/>
        <end position="242"/>
    </location>
</feature>
<feature type="transmembrane region" description="Helical" evidence="2">
    <location>
        <begin position="243"/>
        <end position="263"/>
    </location>
</feature>
<feature type="topological domain" description="Cytoplasmic" evidence="1">
    <location>
        <begin position="264"/>
        <end position="295"/>
    </location>
</feature>
<feature type="transmembrane region" description="Helical" evidence="2">
    <location>
        <begin position="296"/>
        <end position="316"/>
    </location>
</feature>
<feature type="topological domain" description="Periplasmic" evidence="1">
    <location>
        <begin position="317"/>
        <end position="322"/>
    </location>
</feature>
<feature type="transmembrane region" description="Helical" evidence="2">
    <location>
        <begin position="323"/>
        <end position="343"/>
    </location>
</feature>
<feature type="topological domain" description="Cytoplasmic" evidence="1">
    <location>
        <begin position="344"/>
        <end position="356"/>
    </location>
</feature>
<feature type="transmembrane region" description="Helical" evidence="2">
    <location>
        <begin position="357"/>
        <end position="377"/>
    </location>
</feature>
<feature type="topological domain" description="Periplasmic" evidence="1">
    <location>
        <begin position="378"/>
        <end position="383"/>
    </location>
</feature>
<feature type="transmembrane region" description="Helical" evidence="2">
    <location>
        <begin position="384"/>
        <end position="404"/>
    </location>
</feature>
<feature type="topological domain" description="Cytoplasmic" evidence="1">
    <location>
        <begin position="405"/>
        <end position="417"/>
    </location>
</feature>
<feature type="transmembrane region" description="Helical" evidence="2">
    <location>
        <begin position="418"/>
        <end position="438"/>
    </location>
</feature>
<feature type="topological domain" description="Periplasmic" evidence="1">
    <location>
        <begin position="439"/>
        <end position="565"/>
    </location>
</feature>
<feature type="domain" description="Thioredoxin" evidence="2">
    <location>
        <begin position="434"/>
        <end position="565"/>
    </location>
</feature>
<feature type="disulfide bond" description="Redox-active" evidence="2">
    <location>
        <begin position="122"/>
        <end position="128"/>
    </location>
</feature>
<feature type="disulfide bond" description="Redox-active" evidence="2">
    <location>
        <begin position="182"/>
        <end position="304"/>
    </location>
</feature>
<feature type="disulfide bond" description="Redox-active" evidence="2">
    <location>
        <begin position="480"/>
        <end position="483"/>
    </location>
</feature>
<feature type="strand" evidence="3">
    <location>
        <begin position="444"/>
        <end position="448"/>
    </location>
</feature>
<feature type="helix" evidence="3">
    <location>
        <begin position="456"/>
        <end position="465"/>
    </location>
</feature>
<feature type="turn" evidence="3">
    <location>
        <begin position="466"/>
        <end position="468"/>
    </location>
</feature>
<feature type="strand" evidence="3">
    <location>
        <begin position="471"/>
        <end position="476"/>
    </location>
</feature>
<feature type="helix" evidence="3">
    <location>
        <begin position="481"/>
        <end position="489"/>
    </location>
</feature>
<feature type="turn" evidence="3">
    <location>
        <begin position="490"/>
        <end position="492"/>
    </location>
</feature>
<feature type="helix" evidence="3">
    <location>
        <begin position="494"/>
        <end position="499"/>
    </location>
</feature>
<feature type="turn" evidence="3">
    <location>
        <begin position="500"/>
        <end position="502"/>
    </location>
</feature>
<feature type="strand" evidence="3">
    <location>
        <begin position="503"/>
        <end position="509"/>
    </location>
</feature>
<feature type="helix" evidence="3">
    <location>
        <begin position="515"/>
        <end position="524"/>
    </location>
</feature>
<feature type="strand" evidence="3">
    <location>
        <begin position="528"/>
        <end position="535"/>
    </location>
</feature>
<feature type="helix" evidence="3">
    <location>
        <begin position="543"/>
        <end position="545"/>
    </location>
</feature>
<feature type="helix" evidence="3">
    <location>
        <begin position="553"/>
        <end position="563"/>
    </location>
</feature>
<dbReference type="EC" id="1.8.1.8" evidence="2"/>
<dbReference type="EMBL" id="AE005174">
    <property type="protein sequence ID" value="AAG59335.1"/>
    <property type="molecule type" value="Genomic_DNA"/>
</dbReference>
<dbReference type="EMBL" id="BA000007">
    <property type="protein sequence ID" value="BAB38540.1"/>
    <property type="molecule type" value="Genomic_DNA"/>
</dbReference>
<dbReference type="PIR" id="C86109">
    <property type="entry name" value="C86109"/>
</dbReference>
<dbReference type="PIR" id="E91268">
    <property type="entry name" value="E91268"/>
</dbReference>
<dbReference type="RefSeq" id="NP_313144.1">
    <property type="nucleotide sequence ID" value="NC_002695.1"/>
</dbReference>
<dbReference type="RefSeq" id="WP_000068985.1">
    <property type="nucleotide sequence ID" value="NZ_VOAI01000008.1"/>
</dbReference>
<dbReference type="PDB" id="1UC7">
    <property type="method" value="X-ray"/>
    <property type="resolution" value="1.90 A"/>
    <property type="chains" value="A/B=441-565"/>
</dbReference>
<dbReference type="PDBsum" id="1UC7"/>
<dbReference type="BMRB" id="P58162"/>
<dbReference type="SMR" id="P58162"/>
<dbReference type="STRING" id="155864.Z5741"/>
<dbReference type="GeneID" id="914141"/>
<dbReference type="KEGG" id="ece:Z5741"/>
<dbReference type="KEGG" id="ecs:ECs_5117"/>
<dbReference type="PATRIC" id="fig|386585.9.peg.5348"/>
<dbReference type="eggNOG" id="COG4232">
    <property type="taxonomic scope" value="Bacteria"/>
</dbReference>
<dbReference type="HOGENOM" id="CLU_014657_3_0_6"/>
<dbReference type="EvolutionaryTrace" id="P58162"/>
<dbReference type="Proteomes" id="UP000000558">
    <property type="component" value="Chromosome"/>
</dbReference>
<dbReference type="Proteomes" id="UP000002519">
    <property type="component" value="Chromosome"/>
</dbReference>
<dbReference type="GO" id="GO:0005886">
    <property type="term" value="C:plasma membrane"/>
    <property type="evidence" value="ECO:0007669"/>
    <property type="project" value="UniProtKB-SubCell"/>
</dbReference>
<dbReference type="GO" id="GO:0009055">
    <property type="term" value="F:electron transfer activity"/>
    <property type="evidence" value="ECO:0007669"/>
    <property type="project" value="UniProtKB-UniRule"/>
</dbReference>
<dbReference type="GO" id="GO:0047134">
    <property type="term" value="F:protein-disulfide reductase [NAD(P)H] activity"/>
    <property type="evidence" value="ECO:0007669"/>
    <property type="project" value="UniProtKB-UniRule"/>
</dbReference>
<dbReference type="GO" id="GO:0045454">
    <property type="term" value="P:cell redox homeostasis"/>
    <property type="evidence" value="ECO:0007669"/>
    <property type="project" value="TreeGrafter"/>
</dbReference>
<dbReference type="GO" id="GO:0017004">
    <property type="term" value="P:cytochrome complex assembly"/>
    <property type="evidence" value="ECO:0007669"/>
    <property type="project" value="UniProtKB-UniRule"/>
</dbReference>
<dbReference type="CDD" id="cd02953">
    <property type="entry name" value="DsbDgamma"/>
    <property type="match status" value="1"/>
</dbReference>
<dbReference type="FunFam" id="2.60.40.1250:FF:000001">
    <property type="entry name" value="Thiol:disulfide interchange protein DsbD"/>
    <property type="match status" value="1"/>
</dbReference>
<dbReference type="FunFam" id="3.40.30.10:FF:000116">
    <property type="entry name" value="Thiol:disulfide interchange protein DsbD"/>
    <property type="match status" value="1"/>
</dbReference>
<dbReference type="Gene3D" id="3.40.30.10">
    <property type="entry name" value="Glutaredoxin"/>
    <property type="match status" value="1"/>
</dbReference>
<dbReference type="Gene3D" id="2.60.40.1250">
    <property type="entry name" value="Thiol:disulfide interchange protein DsbD, N-terminal domain"/>
    <property type="match status" value="1"/>
</dbReference>
<dbReference type="HAMAP" id="MF_00399">
    <property type="entry name" value="DbsD"/>
    <property type="match status" value="1"/>
</dbReference>
<dbReference type="InterPro" id="IPR003834">
    <property type="entry name" value="Cyt_c_assmbl_TM_dom"/>
</dbReference>
<dbReference type="InterPro" id="IPR035671">
    <property type="entry name" value="DsbD_gamma"/>
</dbReference>
<dbReference type="InterPro" id="IPR028250">
    <property type="entry name" value="DsbDN"/>
</dbReference>
<dbReference type="InterPro" id="IPR036929">
    <property type="entry name" value="DsbDN_sf"/>
</dbReference>
<dbReference type="InterPro" id="IPR022910">
    <property type="entry name" value="Thiol_diS_interchange_DbsD"/>
</dbReference>
<dbReference type="InterPro" id="IPR012336">
    <property type="entry name" value="Thioredoxin-like_fold"/>
</dbReference>
<dbReference type="InterPro" id="IPR036249">
    <property type="entry name" value="Thioredoxin-like_sf"/>
</dbReference>
<dbReference type="InterPro" id="IPR017937">
    <property type="entry name" value="Thioredoxin_CS"/>
</dbReference>
<dbReference type="InterPro" id="IPR013766">
    <property type="entry name" value="Thioredoxin_domain"/>
</dbReference>
<dbReference type="NCBIfam" id="NF001419">
    <property type="entry name" value="PRK00293.1"/>
    <property type="match status" value="1"/>
</dbReference>
<dbReference type="PANTHER" id="PTHR32234">
    <property type="entry name" value="THIOL:DISULFIDE INTERCHANGE PROTEIN DSBD"/>
    <property type="match status" value="1"/>
</dbReference>
<dbReference type="PANTHER" id="PTHR32234:SF0">
    <property type="entry name" value="THIOL:DISULFIDE INTERCHANGE PROTEIN DSBD"/>
    <property type="match status" value="1"/>
</dbReference>
<dbReference type="Pfam" id="PF11412">
    <property type="entry name" value="DsbD_N"/>
    <property type="match status" value="1"/>
</dbReference>
<dbReference type="Pfam" id="PF02683">
    <property type="entry name" value="DsbD_TM"/>
    <property type="match status" value="1"/>
</dbReference>
<dbReference type="Pfam" id="PF13098">
    <property type="entry name" value="Thioredoxin_2"/>
    <property type="match status" value="1"/>
</dbReference>
<dbReference type="SUPFAM" id="SSF74863">
    <property type="entry name" value="Thiol:disulfide interchange protein DsbD, N-terminal domain (DsbD-alpha)"/>
    <property type="match status" value="1"/>
</dbReference>
<dbReference type="SUPFAM" id="SSF52833">
    <property type="entry name" value="Thioredoxin-like"/>
    <property type="match status" value="1"/>
</dbReference>
<dbReference type="PROSITE" id="PS00194">
    <property type="entry name" value="THIOREDOXIN_1"/>
    <property type="match status" value="1"/>
</dbReference>
<dbReference type="PROSITE" id="PS51352">
    <property type="entry name" value="THIOREDOXIN_2"/>
    <property type="match status" value="1"/>
</dbReference>
<gene>
    <name evidence="2" type="primary">dsbD</name>
    <name type="ordered locus">Z5741</name>
    <name type="ordered locus">ECs5117</name>
</gene>
<organism>
    <name type="scientific">Escherichia coli O157:H7</name>
    <dbReference type="NCBI Taxonomy" id="83334"/>
    <lineage>
        <taxon>Bacteria</taxon>
        <taxon>Pseudomonadati</taxon>
        <taxon>Pseudomonadota</taxon>
        <taxon>Gammaproteobacteria</taxon>
        <taxon>Enterobacterales</taxon>
        <taxon>Enterobacteriaceae</taxon>
        <taxon>Escherichia</taxon>
    </lineage>
</organism>
<protein>
    <recommendedName>
        <fullName evidence="2">Thiol:disulfide interchange protein DsbD</fullName>
        <ecNumber evidence="2">1.8.1.8</ecNumber>
    </recommendedName>
    <alternativeName>
        <fullName evidence="2">Protein-disulfide reductase</fullName>
        <shortName evidence="2">Disulfide reductase</shortName>
    </alternativeName>
</protein>
<name>DSBD_ECO57</name>
<reference key="1">
    <citation type="journal article" date="2001" name="Nature">
        <title>Genome sequence of enterohaemorrhagic Escherichia coli O157:H7.</title>
        <authorList>
            <person name="Perna N.T."/>
            <person name="Plunkett G. III"/>
            <person name="Burland V."/>
            <person name="Mau B."/>
            <person name="Glasner J.D."/>
            <person name="Rose D.J."/>
            <person name="Mayhew G.F."/>
            <person name="Evans P.S."/>
            <person name="Gregor J."/>
            <person name="Kirkpatrick H.A."/>
            <person name="Posfai G."/>
            <person name="Hackett J."/>
            <person name="Klink S."/>
            <person name="Boutin A."/>
            <person name="Shao Y."/>
            <person name="Miller L."/>
            <person name="Grotbeck E.J."/>
            <person name="Davis N.W."/>
            <person name="Lim A."/>
            <person name="Dimalanta E.T."/>
            <person name="Potamousis K."/>
            <person name="Apodaca J."/>
            <person name="Anantharaman T.S."/>
            <person name="Lin J."/>
            <person name="Yen G."/>
            <person name="Schwartz D.C."/>
            <person name="Welch R.A."/>
            <person name="Blattner F.R."/>
        </authorList>
    </citation>
    <scope>NUCLEOTIDE SEQUENCE [LARGE SCALE GENOMIC DNA]</scope>
    <source>
        <strain>O157:H7 / EDL933 / ATCC 700927 / EHEC</strain>
    </source>
</reference>
<reference key="2">
    <citation type="journal article" date="2001" name="DNA Res.">
        <title>Complete genome sequence of enterohemorrhagic Escherichia coli O157:H7 and genomic comparison with a laboratory strain K-12.</title>
        <authorList>
            <person name="Hayashi T."/>
            <person name="Makino K."/>
            <person name="Ohnishi M."/>
            <person name="Kurokawa K."/>
            <person name="Ishii K."/>
            <person name="Yokoyama K."/>
            <person name="Han C.-G."/>
            <person name="Ohtsubo E."/>
            <person name="Nakayama K."/>
            <person name="Murata T."/>
            <person name="Tanaka M."/>
            <person name="Tobe T."/>
            <person name="Iida T."/>
            <person name="Takami H."/>
            <person name="Honda T."/>
            <person name="Sasakawa C."/>
            <person name="Ogasawara N."/>
            <person name="Yasunaga T."/>
            <person name="Kuhara S."/>
            <person name="Shiba T."/>
            <person name="Hattori M."/>
            <person name="Shinagawa H."/>
        </authorList>
    </citation>
    <scope>NUCLEOTIDE SEQUENCE [LARGE SCALE GENOMIC DNA]</scope>
    <source>
        <strain>O157:H7 / Sakai / RIMD 0509952 / EHEC</strain>
    </source>
</reference>
<accession>P58162</accession>
<evidence type="ECO:0000255" key="1"/>
<evidence type="ECO:0000255" key="2">
    <source>
        <dbReference type="HAMAP-Rule" id="MF_00399"/>
    </source>
</evidence>
<evidence type="ECO:0007829" key="3">
    <source>
        <dbReference type="PDB" id="1UC7"/>
    </source>
</evidence>
<proteinExistence type="evidence at protein level"/>
<comment type="function">
    <text evidence="2">Required to facilitate the formation of correct disulfide bonds in some periplasmic proteins and for the assembly of the periplasmic c-type cytochromes. Acts by transferring electrons from cytoplasmic thioredoxin to the periplasm. This transfer involves a cascade of disulfide bond formation and reduction steps.</text>
</comment>
<comment type="catalytic activity">
    <reaction evidence="2">
        <text>[protein]-dithiol + NAD(+) = [protein]-disulfide + NADH + H(+)</text>
        <dbReference type="Rhea" id="RHEA:18749"/>
        <dbReference type="Rhea" id="RHEA-COMP:10593"/>
        <dbReference type="Rhea" id="RHEA-COMP:10594"/>
        <dbReference type="ChEBI" id="CHEBI:15378"/>
        <dbReference type="ChEBI" id="CHEBI:29950"/>
        <dbReference type="ChEBI" id="CHEBI:50058"/>
        <dbReference type="ChEBI" id="CHEBI:57540"/>
        <dbReference type="ChEBI" id="CHEBI:57945"/>
        <dbReference type="EC" id="1.8.1.8"/>
    </reaction>
</comment>
<comment type="catalytic activity">
    <reaction evidence="2">
        <text>[protein]-dithiol + NADP(+) = [protein]-disulfide + NADPH + H(+)</text>
        <dbReference type="Rhea" id="RHEA:18753"/>
        <dbReference type="Rhea" id="RHEA-COMP:10593"/>
        <dbReference type="Rhea" id="RHEA-COMP:10594"/>
        <dbReference type="ChEBI" id="CHEBI:15378"/>
        <dbReference type="ChEBI" id="CHEBI:29950"/>
        <dbReference type="ChEBI" id="CHEBI:50058"/>
        <dbReference type="ChEBI" id="CHEBI:57783"/>
        <dbReference type="ChEBI" id="CHEBI:58349"/>
        <dbReference type="EC" id="1.8.1.8"/>
    </reaction>
</comment>
<comment type="subcellular location">
    <subcellularLocation>
        <location evidence="2">Cell inner membrane</location>
        <topology evidence="2">Multi-pass membrane protein</topology>
    </subcellularLocation>
</comment>
<comment type="similarity">
    <text evidence="2">Belongs to the thioredoxin family. DsbD subfamily.</text>
</comment>